<dbReference type="EMBL" id="CP000103">
    <property type="protein sequence ID" value="ABB76001.1"/>
    <property type="status" value="ALT_INIT"/>
    <property type="molecule type" value="Genomic_DNA"/>
</dbReference>
<dbReference type="RefSeq" id="WP_074775041.1">
    <property type="nucleotide sequence ID" value="NC_007614.1"/>
</dbReference>
<dbReference type="SMR" id="Q2Y5H0"/>
<dbReference type="STRING" id="323848.Nmul_A2714"/>
<dbReference type="KEGG" id="nmu:Nmul_A2714"/>
<dbReference type="eggNOG" id="COG0823">
    <property type="taxonomic scope" value="Bacteria"/>
</dbReference>
<dbReference type="HOGENOM" id="CLU_047123_0_0_4"/>
<dbReference type="OrthoDB" id="9802240at2"/>
<dbReference type="Proteomes" id="UP000002718">
    <property type="component" value="Chromosome"/>
</dbReference>
<dbReference type="GO" id="GO:0042597">
    <property type="term" value="C:periplasmic space"/>
    <property type="evidence" value="ECO:0007669"/>
    <property type="project" value="UniProtKB-SubCell"/>
</dbReference>
<dbReference type="GO" id="GO:0051301">
    <property type="term" value="P:cell division"/>
    <property type="evidence" value="ECO:0007669"/>
    <property type="project" value="UniProtKB-UniRule"/>
</dbReference>
<dbReference type="GO" id="GO:0017038">
    <property type="term" value="P:protein import"/>
    <property type="evidence" value="ECO:0007669"/>
    <property type="project" value="InterPro"/>
</dbReference>
<dbReference type="Gene3D" id="2.120.10.30">
    <property type="entry name" value="TolB, C-terminal domain"/>
    <property type="match status" value="1"/>
</dbReference>
<dbReference type="Gene3D" id="3.40.50.10070">
    <property type="entry name" value="TolB, N-terminal domain"/>
    <property type="match status" value="1"/>
</dbReference>
<dbReference type="HAMAP" id="MF_00671">
    <property type="entry name" value="TolB"/>
    <property type="match status" value="1"/>
</dbReference>
<dbReference type="InterPro" id="IPR011042">
    <property type="entry name" value="6-blade_b-propeller_TolB-like"/>
</dbReference>
<dbReference type="InterPro" id="IPR011659">
    <property type="entry name" value="PD40"/>
</dbReference>
<dbReference type="InterPro" id="IPR014167">
    <property type="entry name" value="Tol-Pal_TolB"/>
</dbReference>
<dbReference type="InterPro" id="IPR007195">
    <property type="entry name" value="TolB_N"/>
</dbReference>
<dbReference type="NCBIfam" id="TIGR02800">
    <property type="entry name" value="propeller_TolB"/>
    <property type="match status" value="1"/>
</dbReference>
<dbReference type="PANTHER" id="PTHR36842:SF1">
    <property type="entry name" value="PROTEIN TOLB"/>
    <property type="match status" value="1"/>
</dbReference>
<dbReference type="PANTHER" id="PTHR36842">
    <property type="entry name" value="PROTEIN TOLB HOMOLOG"/>
    <property type="match status" value="1"/>
</dbReference>
<dbReference type="Pfam" id="PF07676">
    <property type="entry name" value="PD40"/>
    <property type="match status" value="5"/>
</dbReference>
<dbReference type="Pfam" id="PF04052">
    <property type="entry name" value="TolB_N"/>
    <property type="match status" value="1"/>
</dbReference>
<dbReference type="SUPFAM" id="SSF52964">
    <property type="entry name" value="TolB, N-terminal domain"/>
    <property type="match status" value="1"/>
</dbReference>
<dbReference type="SUPFAM" id="SSF69304">
    <property type="entry name" value="Tricorn protease N-terminal domain"/>
    <property type="match status" value="1"/>
</dbReference>
<evidence type="ECO:0000255" key="1">
    <source>
        <dbReference type="HAMAP-Rule" id="MF_00671"/>
    </source>
</evidence>
<evidence type="ECO:0000256" key="2">
    <source>
        <dbReference type="SAM" id="MobiDB-lite"/>
    </source>
</evidence>
<evidence type="ECO:0000305" key="3"/>
<protein>
    <recommendedName>
        <fullName evidence="1">Tol-Pal system protein TolB</fullName>
    </recommendedName>
</protein>
<keyword id="KW-0131">Cell cycle</keyword>
<keyword id="KW-0132">Cell division</keyword>
<keyword id="KW-0574">Periplasm</keyword>
<keyword id="KW-1185">Reference proteome</keyword>
<keyword id="KW-0732">Signal</keyword>
<name>TOLB_NITMU</name>
<comment type="function">
    <text evidence="1">Part of the Tol-Pal system, which plays a role in outer membrane invagination during cell division and is important for maintaining outer membrane integrity.</text>
</comment>
<comment type="subunit">
    <text evidence="1">The Tol-Pal system is composed of five core proteins: the inner membrane proteins TolA, TolQ and TolR, the periplasmic protein TolB and the outer membrane protein Pal. They form a network linking the inner and outer membranes and the peptidoglycan layer.</text>
</comment>
<comment type="subcellular location">
    <subcellularLocation>
        <location evidence="1">Periplasm</location>
    </subcellularLocation>
</comment>
<comment type="similarity">
    <text evidence="1">Belongs to the TolB family.</text>
</comment>
<comment type="sequence caution" evidence="3">
    <conflict type="erroneous initiation">
        <sequence resource="EMBL-CDS" id="ABB76001"/>
    </conflict>
</comment>
<accession>Q2Y5H0</accession>
<feature type="signal peptide" evidence="1">
    <location>
        <begin position="1"/>
        <end position="30"/>
    </location>
</feature>
<feature type="chain" id="PRO_0000259062" description="Tol-Pal system protein TolB" evidence="1">
    <location>
        <begin position="31"/>
        <end position="437"/>
    </location>
</feature>
<feature type="region of interest" description="Disordered" evidence="2">
    <location>
        <begin position="410"/>
        <end position="437"/>
    </location>
</feature>
<feature type="compositionally biased region" description="Polar residues" evidence="2">
    <location>
        <begin position="410"/>
        <end position="423"/>
    </location>
</feature>
<proteinExistence type="inferred from homology"/>
<gene>
    <name evidence="1" type="primary">tolB</name>
    <name type="ordered locus">Nmul_A2714</name>
</gene>
<organism>
    <name type="scientific">Nitrosospira multiformis (strain ATCC 25196 / NCIMB 11849 / C 71)</name>
    <dbReference type="NCBI Taxonomy" id="323848"/>
    <lineage>
        <taxon>Bacteria</taxon>
        <taxon>Pseudomonadati</taxon>
        <taxon>Pseudomonadota</taxon>
        <taxon>Betaproteobacteria</taxon>
        <taxon>Nitrosomonadales</taxon>
        <taxon>Nitrosomonadaceae</taxon>
        <taxon>Nitrosospira</taxon>
    </lineage>
</organism>
<sequence>MLPTPSRSHKLSGYAAVLFFLWLVCSPAQAALNIEIFGGGANQIPVAIVPFSGEEGLGAQSLTPVISADLQRTGLFKLVDPGGLRPHEPVEVSFPDWINRGASALAIGTAIPVSGGQISIRVRLLDVARQAELGSYVETVAPEQLRAAAHRIADMIYEKLTGDVGVFSTRIAYVIKQGKKYSLQVADADGFNAQPVIEYTEPIISPAWSPDGTRLAYVSFENKKPVVYVQTLATRTRKAVANFRGSNSAPAWSPDGRKLAVVLSVMGGSQIFLINSDGGGLQRLTQSSGIDTEPSFSPDGRYIIFTSDRGGSPQIYRMPVTGGVSKVAERLTFEGSYNVSPRYSPDGKGFTFIHRSGDRFNVAIQDFATGQVRLLTDSRFDESPSFAPNGRMVLYATEIRGRGILSAVSSDGRTRQQLSTQTGDIREPAWGPLRRLQ</sequence>
<reference key="1">
    <citation type="submission" date="2005-08" db="EMBL/GenBank/DDBJ databases">
        <title>Complete sequence of chromosome 1 of Nitrosospira multiformis ATCC 25196.</title>
        <authorList>
            <person name="Copeland A."/>
            <person name="Lucas S."/>
            <person name="Lapidus A."/>
            <person name="Barry K."/>
            <person name="Detter J.C."/>
            <person name="Glavina T."/>
            <person name="Hammon N."/>
            <person name="Israni S."/>
            <person name="Pitluck S."/>
            <person name="Chain P."/>
            <person name="Malfatti S."/>
            <person name="Shin M."/>
            <person name="Vergez L."/>
            <person name="Schmutz J."/>
            <person name="Larimer F."/>
            <person name="Land M."/>
            <person name="Hauser L."/>
            <person name="Kyrpides N."/>
            <person name="Lykidis A."/>
            <person name="Richardson P."/>
        </authorList>
    </citation>
    <scope>NUCLEOTIDE SEQUENCE [LARGE SCALE GENOMIC DNA]</scope>
    <source>
        <strain>ATCC 25196 / NCIMB 11849 / C 71</strain>
    </source>
</reference>